<comment type="function">
    <text evidence="2">Required during the maturation of the embryonic nervous system for maintenance of neuronal and cuticular connectivity. Essential for maintenance of dopaminergic neurons and dopamine levels (By similarity).</text>
</comment>
<comment type="subcellular location">
    <subcellularLocation>
        <location evidence="2">Secreted</location>
    </subcellularLocation>
</comment>
<comment type="similarity">
    <text evidence="3">Belongs to the ARMET family.</text>
</comment>
<sequence length="173" mass="19903">MKTAHLVVVVCFLAGALQTAVALKEEDCEVCVKTVRRFADSLDDTTKKDYRKIETSFKKFCSGQKNKEHRFCYYLGGLEESATGILNELSKPLSWSMPAEKICEKLKKKDAQICDLRYEKQIDLNSVDLKKLKVRDLKKILNDWDESCDGCLEKSDFIKRIEELKPKYAHGEL</sequence>
<proteinExistence type="inferred from homology"/>
<gene>
    <name evidence="2" type="primary">Manf</name>
    <name type="ORF">GF18493</name>
</gene>
<organism>
    <name type="scientific">Drosophila ananassae</name>
    <name type="common">Fruit fly</name>
    <dbReference type="NCBI Taxonomy" id="7217"/>
    <lineage>
        <taxon>Eukaryota</taxon>
        <taxon>Metazoa</taxon>
        <taxon>Ecdysozoa</taxon>
        <taxon>Arthropoda</taxon>
        <taxon>Hexapoda</taxon>
        <taxon>Insecta</taxon>
        <taxon>Pterygota</taxon>
        <taxon>Neoptera</taxon>
        <taxon>Endopterygota</taxon>
        <taxon>Diptera</taxon>
        <taxon>Brachycera</taxon>
        <taxon>Muscomorpha</taxon>
        <taxon>Ephydroidea</taxon>
        <taxon>Drosophilidae</taxon>
        <taxon>Drosophila</taxon>
        <taxon>Sophophora</taxon>
    </lineage>
</organism>
<protein>
    <recommendedName>
        <fullName>Mesencephalic astrocyte-derived neurotrophic factor homolog</fullName>
    </recommendedName>
    <alternativeName>
        <fullName>MANF/CDNF-like protein</fullName>
    </alternativeName>
</protein>
<dbReference type="EMBL" id="CH902617">
    <property type="protein sequence ID" value="EDV43440.1"/>
    <property type="molecule type" value="Genomic_DNA"/>
</dbReference>
<dbReference type="SMR" id="B3M2I7"/>
<dbReference type="FunCoup" id="B3M2I7">
    <property type="interactions" value="385"/>
</dbReference>
<dbReference type="STRING" id="7217.B3M2I7"/>
<dbReference type="EnsemblMetazoa" id="FBtr0123193">
    <property type="protein sequence ID" value="FBpp0121685"/>
    <property type="gene ID" value="FBgn0095511"/>
</dbReference>
<dbReference type="EnsemblMetazoa" id="XM_001954843.4">
    <property type="protein sequence ID" value="XP_001954879.1"/>
    <property type="gene ID" value="LOC6501266"/>
</dbReference>
<dbReference type="GeneID" id="6501266"/>
<dbReference type="KEGG" id="dan:6501266"/>
<dbReference type="CTD" id="7873"/>
<dbReference type="eggNOG" id="KOG4154">
    <property type="taxonomic scope" value="Eukaryota"/>
</dbReference>
<dbReference type="HOGENOM" id="CLU_099080_1_0_1"/>
<dbReference type="InParanoid" id="B3M2I7"/>
<dbReference type="OMA" id="WSMPADK"/>
<dbReference type="OrthoDB" id="5597848at2759"/>
<dbReference type="PhylomeDB" id="B3M2I7"/>
<dbReference type="ChiTaRS" id="Manf">
    <property type="organism name" value="fly"/>
</dbReference>
<dbReference type="Proteomes" id="UP000007801">
    <property type="component" value="Unassembled WGS sequence"/>
</dbReference>
<dbReference type="GO" id="GO:0005783">
    <property type="term" value="C:endoplasmic reticulum"/>
    <property type="evidence" value="ECO:0007669"/>
    <property type="project" value="EnsemblMetazoa"/>
</dbReference>
<dbReference type="GO" id="GO:0005615">
    <property type="term" value="C:extracellular space"/>
    <property type="evidence" value="ECO:0007669"/>
    <property type="project" value="TreeGrafter"/>
</dbReference>
<dbReference type="GO" id="GO:0045202">
    <property type="term" value="C:synapse"/>
    <property type="evidence" value="ECO:0007669"/>
    <property type="project" value="GOC"/>
</dbReference>
<dbReference type="GO" id="GO:0005509">
    <property type="term" value="F:calcium ion binding"/>
    <property type="evidence" value="ECO:0007669"/>
    <property type="project" value="InterPro"/>
</dbReference>
<dbReference type="GO" id="GO:0042417">
    <property type="term" value="P:dopamine metabolic process"/>
    <property type="evidence" value="ECO:0007669"/>
    <property type="project" value="EnsemblMetazoa"/>
</dbReference>
<dbReference type="GO" id="GO:0071542">
    <property type="term" value="P:dopaminergic neuron differentiation"/>
    <property type="evidence" value="ECO:0007669"/>
    <property type="project" value="TreeGrafter"/>
</dbReference>
<dbReference type="GO" id="GO:0070050">
    <property type="term" value="P:neuron cellular homeostasis"/>
    <property type="evidence" value="ECO:0007669"/>
    <property type="project" value="EnsemblMetazoa"/>
</dbReference>
<dbReference type="GO" id="GO:0031175">
    <property type="term" value="P:neuron projection development"/>
    <property type="evidence" value="ECO:0007669"/>
    <property type="project" value="EnsemblMetazoa"/>
</dbReference>
<dbReference type="GO" id="GO:0001963">
    <property type="term" value="P:synaptic transmission, dopaminergic"/>
    <property type="evidence" value="ECO:0007669"/>
    <property type="project" value="EnsemblMetazoa"/>
</dbReference>
<dbReference type="FunFam" id="1.10.225.10:FF:000003">
    <property type="entry name" value="Mesencephalic astrocyte-derived neurotrophic factor"/>
    <property type="match status" value="1"/>
</dbReference>
<dbReference type="FunFam" id="1.10.720.30:FF:000003">
    <property type="entry name" value="Mesencephalic astrocyte-derived neurotrophic factor"/>
    <property type="match status" value="1"/>
</dbReference>
<dbReference type="Gene3D" id="1.10.720.30">
    <property type="entry name" value="SAP domain"/>
    <property type="match status" value="1"/>
</dbReference>
<dbReference type="Gene3D" id="1.10.225.10">
    <property type="entry name" value="Saposin-like"/>
    <property type="match status" value="1"/>
</dbReference>
<dbReference type="InterPro" id="IPR045333">
    <property type="entry name" value="ARMET-like"/>
</dbReference>
<dbReference type="InterPro" id="IPR019345">
    <property type="entry name" value="ARMET_C"/>
</dbReference>
<dbReference type="InterPro" id="IPR045332">
    <property type="entry name" value="ARMET_N"/>
</dbReference>
<dbReference type="InterPro" id="IPR018247">
    <property type="entry name" value="EF_Hand_1_Ca_BS"/>
</dbReference>
<dbReference type="InterPro" id="IPR002048">
    <property type="entry name" value="EF_hand_dom"/>
</dbReference>
<dbReference type="InterPro" id="IPR036361">
    <property type="entry name" value="SAP_dom_sf"/>
</dbReference>
<dbReference type="PANTHER" id="PTHR12990">
    <property type="entry name" value="ARMET-LIKE PROTEIN"/>
    <property type="match status" value="1"/>
</dbReference>
<dbReference type="PANTHER" id="PTHR12990:SF5">
    <property type="entry name" value="MESENCEPHALIC ASTROCYTE-DERIVED NEUROTROPHIC FACTOR HOMOLOG"/>
    <property type="match status" value="1"/>
</dbReference>
<dbReference type="Pfam" id="PF10208">
    <property type="entry name" value="ARMET_C"/>
    <property type="match status" value="1"/>
</dbReference>
<dbReference type="Pfam" id="PF20145">
    <property type="entry name" value="ARMET_N"/>
    <property type="match status" value="1"/>
</dbReference>
<dbReference type="SUPFAM" id="SSF68906">
    <property type="entry name" value="SAP domain"/>
    <property type="match status" value="1"/>
</dbReference>
<feature type="signal peptide" evidence="3">
    <location>
        <begin position="1"/>
        <end position="22"/>
    </location>
</feature>
<feature type="chain" id="PRO_0000390938" description="Mesencephalic astrocyte-derived neurotrophic factor homolog">
    <location>
        <begin position="23"/>
        <end position="173"/>
    </location>
</feature>
<feature type="disulfide bond" evidence="1">
    <location>
        <begin position="28"/>
        <end position="114"/>
    </location>
</feature>
<feature type="disulfide bond" evidence="1">
    <location>
        <begin position="31"/>
        <end position="103"/>
    </location>
</feature>
<feature type="disulfide bond" evidence="1">
    <location>
        <begin position="61"/>
        <end position="72"/>
    </location>
</feature>
<feature type="disulfide bond" evidence="1">
    <location>
        <begin position="148"/>
        <end position="151"/>
    </location>
</feature>
<accession>B3M2I7</accession>
<keyword id="KW-0217">Developmental protein</keyword>
<keyword id="KW-1015">Disulfide bond</keyword>
<keyword id="KW-1185">Reference proteome</keyword>
<keyword id="KW-0964">Secreted</keyword>
<keyword id="KW-0732">Signal</keyword>
<name>ARMET_DROAN</name>
<reference evidence="4" key="1">
    <citation type="journal article" date="2007" name="Nature">
        <title>Evolution of genes and genomes on the Drosophila phylogeny.</title>
        <authorList>
            <consortium name="Drosophila 12 genomes consortium"/>
        </authorList>
    </citation>
    <scope>NUCLEOTIDE SEQUENCE [LARGE SCALE GENOMIC DNA]</scope>
    <source>
        <strain evidence="4">Tucson 14024-0371.13</strain>
    </source>
</reference>
<evidence type="ECO:0000250" key="1">
    <source>
        <dbReference type="UniProtKB" id="P55145"/>
    </source>
</evidence>
<evidence type="ECO:0000250" key="2">
    <source>
        <dbReference type="UniProtKB" id="Q9XZ63"/>
    </source>
</evidence>
<evidence type="ECO:0000255" key="3"/>
<evidence type="ECO:0000312" key="4">
    <source>
        <dbReference type="EMBL" id="EDV43440.1"/>
    </source>
</evidence>